<evidence type="ECO:0000250" key="1"/>
<evidence type="ECO:0000255" key="2">
    <source>
        <dbReference type="HAMAP-Rule" id="MF_00047"/>
    </source>
</evidence>
<proteinExistence type="inferred from homology"/>
<dbReference type="EC" id="6.3.2.4" evidence="2"/>
<dbReference type="EMBL" id="AL583923">
    <property type="protein sequence ID" value="CAC30631.1"/>
    <property type="molecule type" value="Genomic_DNA"/>
</dbReference>
<dbReference type="PIR" id="H87118">
    <property type="entry name" value="H87118"/>
</dbReference>
<dbReference type="RefSeq" id="NP_302152.1">
    <property type="nucleotide sequence ID" value="NC_002677.1"/>
</dbReference>
<dbReference type="SMR" id="Q9CBS0"/>
<dbReference type="STRING" id="272631.gene:17575521"/>
<dbReference type="KEGG" id="mle:ML1678"/>
<dbReference type="PATRIC" id="fig|272631.5.peg.3170"/>
<dbReference type="Leproma" id="ML1678"/>
<dbReference type="eggNOG" id="COG1181">
    <property type="taxonomic scope" value="Bacteria"/>
</dbReference>
<dbReference type="HOGENOM" id="CLU_039268_0_1_11"/>
<dbReference type="OrthoDB" id="9813261at2"/>
<dbReference type="UniPathway" id="UPA00219"/>
<dbReference type="Proteomes" id="UP000000806">
    <property type="component" value="Chromosome"/>
</dbReference>
<dbReference type="GO" id="GO:0005829">
    <property type="term" value="C:cytosol"/>
    <property type="evidence" value="ECO:0007669"/>
    <property type="project" value="TreeGrafter"/>
</dbReference>
<dbReference type="GO" id="GO:0005524">
    <property type="term" value="F:ATP binding"/>
    <property type="evidence" value="ECO:0007669"/>
    <property type="project" value="UniProtKB-KW"/>
</dbReference>
<dbReference type="GO" id="GO:0008716">
    <property type="term" value="F:D-alanine-D-alanine ligase activity"/>
    <property type="evidence" value="ECO:0007669"/>
    <property type="project" value="UniProtKB-UniRule"/>
</dbReference>
<dbReference type="GO" id="GO:0046872">
    <property type="term" value="F:metal ion binding"/>
    <property type="evidence" value="ECO:0007669"/>
    <property type="project" value="UniProtKB-KW"/>
</dbReference>
<dbReference type="GO" id="GO:0071555">
    <property type="term" value="P:cell wall organization"/>
    <property type="evidence" value="ECO:0007669"/>
    <property type="project" value="UniProtKB-KW"/>
</dbReference>
<dbReference type="GO" id="GO:0009252">
    <property type="term" value="P:peptidoglycan biosynthetic process"/>
    <property type="evidence" value="ECO:0007669"/>
    <property type="project" value="UniProtKB-UniRule"/>
</dbReference>
<dbReference type="GO" id="GO:0008360">
    <property type="term" value="P:regulation of cell shape"/>
    <property type="evidence" value="ECO:0007669"/>
    <property type="project" value="UniProtKB-KW"/>
</dbReference>
<dbReference type="FunFam" id="3.30.470.20:FF:000008">
    <property type="entry name" value="D-alanine--D-alanine ligase"/>
    <property type="match status" value="1"/>
</dbReference>
<dbReference type="Gene3D" id="3.40.50.20">
    <property type="match status" value="1"/>
</dbReference>
<dbReference type="Gene3D" id="3.30.1490.20">
    <property type="entry name" value="ATP-grasp fold, A domain"/>
    <property type="match status" value="1"/>
</dbReference>
<dbReference type="Gene3D" id="3.30.470.20">
    <property type="entry name" value="ATP-grasp fold, B domain"/>
    <property type="match status" value="1"/>
</dbReference>
<dbReference type="HAMAP" id="MF_00047">
    <property type="entry name" value="Dala_Dala_lig"/>
    <property type="match status" value="1"/>
</dbReference>
<dbReference type="InterPro" id="IPR011761">
    <property type="entry name" value="ATP-grasp"/>
</dbReference>
<dbReference type="InterPro" id="IPR013815">
    <property type="entry name" value="ATP_grasp_subdomain_1"/>
</dbReference>
<dbReference type="InterPro" id="IPR000291">
    <property type="entry name" value="D-Ala_lig_Van_CS"/>
</dbReference>
<dbReference type="InterPro" id="IPR005905">
    <property type="entry name" value="D_ala_D_ala"/>
</dbReference>
<dbReference type="InterPro" id="IPR011095">
    <property type="entry name" value="Dala_Dala_lig_C"/>
</dbReference>
<dbReference type="InterPro" id="IPR011127">
    <property type="entry name" value="Dala_Dala_lig_N"/>
</dbReference>
<dbReference type="InterPro" id="IPR016185">
    <property type="entry name" value="PreATP-grasp_dom_sf"/>
</dbReference>
<dbReference type="NCBIfam" id="TIGR01205">
    <property type="entry name" value="D_ala_D_alaTIGR"/>
    <property type="match status" value="1"/>
</dbReference>
<dbReference type="NCBIfam" id="NF002528">
    <property type="entry name" value="PRK01966.1-4"/>
    <property type="match status" value="1"/>
</dbReference>
<dbReference type="PANTHER" id="PTHR23132">
    <property type="entry name" value="D-ALANINE--D-ALANINE LIGASE"/>
    <property type="match status" value="1"/>
</dbReference>
<dbReference type="PANTHER" id="PTHR23132:SF25">
    <property type="entry name" value="D-ALANINE--D-ALANINE LIGASE A"/>
    <property type="match status" value="1"/>
</dbReference>
<dbReference type="Pfam" id="PF07478">
    <property type="entry name" value="Dala_Dala_lig_C"/>
    <property type="match status" value="1"/>
</dbReference>
<dbReference type="Pfam" id="PF01820">
    <property type="entry name" value="Dala_Dala_lig_N"/>
    <property type="match status" value="1"/>
</dbReference>
<dbReference type="PIRSF" id="PIRSF039102">
    <property type="entry name" value="Ddl/VanB"/>
    <property type="match status" value="1"/>
</dbReference>
<dbReference type="SUPFAM" id="SSF56059">
    <property type="entry name" value="Glutathione synthetase ATP-binding domain-like"/>
    <property type="match status" value="1"/>
</dbReference>
<dbReference type="SUPFAM" id="SSF52440">
    <property type="entry name" value="PreATP-grasp domain"/>
    <property type="match status" value="1"/>
</dbReference>
<dbReference type="PROSITE" id="PS50975">
    <property type="entry name" value="ATP_GRASP"/>
    <property type="match status" value="1"/>
</dbReference>
<dbReference type="PROSITE" id="PS00843">
    <property type="entry name" value="DALA_DALA_LIGASE_1"/>
    <property type="match status" value="1"/>
</dbReference>
<dbReference type="PROSITE" id="PS00844">
    <property type="entry name" value="DALA_DALA_LIGASE_2"/>
    <property type="match status" value="1"/>
</dbReference>
<name>DDL_MYCLE</name>
<sequence length="384" mass="40981">MNVYQRPLMPWLPSGGRVRVAVVFGGRSNEHAVSCLSAGSILRNLDRQRFDVVAVGITPEGTWMLTDPNPDALAIANRQLPAVSCESGIELTLPADPRRSGQLVSLSHGAGLGAGEVLTSVDVVFPVLHGPYGEDGTIQGLLELARVPYVGAGVLASAAGMDKEFTKKLFAAEGLPLSAYTVLRPLRPTLHRQECERLSLPVFVKPARGGSSIGISRVSSWGQLPSAIAYARRHDPKVIVEAAVNGRELECGVLEMPDGTVAASAVGEIRVAGVSGSEDSFYDFTTKYLDDAAELDVPAKVDDDVADEVRQLAIQAFRAIDCQGLARVDFFLTDDGPVINEINTMPGFTMTSMYPKLWAVSSVDYPTLLATMVDTALARGVGMR</sequence>
<comment type="function">
    <text evidence="2">Cell wall formation.</text>
</comment>
<comment type="catalytic activity">
    <reaction evidence="2">
        <text>2 D-alanine + ATP = D-alanyl-D-alanine + ADP + phosphate + H(+)</text>
        <dbReference type="Rhea" id="RHEA:11224"/>
        <dbReference type="ChEBI" id="CHEBI:15378"/>
        <dbReference type="ChEBI" id="CHEBI:30616"/>
        <dbReference type="ChEBI" id="CHEBI:43474"/>
        <dbReference type="ChEBI" id="CHEBI:57416"/>
        <dbReference type="ChEBI" id="CHEBI:57822"/>
        <dbReference type="ChEBI" id="CHEBI:456216"/>
        <dbReference type="EC" id="6.3.2.4"/>
    </reaction>
</comment>
<comment type="cofactor">
    <cofactor evidence="1">
        <name>Mg(2+)</name>
        <dbReference type="ChEBI" id="CHEBI:18420"/>
    </cofactor>
    <cofactor evidence="1">
        <name>Mn(2+)</name>
        <dbReference type="ChEBI" id="CHEBI:29035"/>
    </cofactor>
    <text evidence="1">Binds 2 magnesium or manganese ions per subunit.</text>
</comment>
<comment type="pathway">
    <text evidence="2">Cell wall biogenesis; peptidoglycan biosynthesis.</text>
</comment>
<comment type="subcellular location">
    <subcellularLocation>
        <location evidence="2">Cytoplasm</location>
    </subcellularLocation>
</comment>
<comment type="similarity">
    <text evidence="2">Belongs to the D-alanine--D-alanine ligase family.</text>
</comment>
<accession>Q9CBS0</accession>
<reference key="1">
    <citation type="journal article" date="2001" name="Nature">
        <title>Massive gene decay in the leprosy bacillus.</title>
        <authorList>
            <person name="Cole S.T."/>
            <person name="Eiglmeier K."/>
            <person name="Parkhill J."/>
            <person name="James K.D."/>
            <person name="Thomson N.R."/>
            <person name="Wheeler P.R."/>
            <person name="Honore N."/>
            <person name="Garnier T."/>
            <person name="Churcher C.M."/>
            <person name="Harris D.E."/>
            <person name="Mungall K.L."/>
            <person name="Basham D."/>
            <person name="Brown D."/>
            <person name="Chillingworth T."/>
            <person name="Connor R."/>
            <person name="Davies R.M."/>
            <person name="Devlin K."/>
            <person name="Duthoy S."/>
            <person name="Feltwell T."/>
            <person name="Fraser A."/>
            <person name="Hamlin N."/>
            <person name="Holroyd S."/>
            <person name="Hornsby T."/>
            <person name="Jagels K."/>
            <person name="Lacroix C."/>
            <person name="Maclean J."/>
            <person name="Moule S."/>
            <person name="Murphy L.D."/>
            <person name="Oliver K."/>
            <person name="Quail M.A."/>
            <person name="Rajandream M.A."/>
            <person name="Rutherford K.M."/>
            <person name="Rutter S."/>
            <person name="Seeger K."/>
            <person name="Simon S."/>
            <person name="Simmonds M."/>
            <person name="Skelton J."/>
            <person name="Squares R."/>
            <person name="Squares S."/>
            <person name="Stevens K."/>
            <person name="Taylor K."/>
            <person name="Whitehead S."/>
            <person name="Woodward J.R."/>
            <person name="Barrell B.G."/>
        </authorList>
    </citation>
    <scope>NUCLEOTIDE SEQUENCE [LARGE SCALE GENOMIC DNA]</scope>
    <source>
        <strain>TN</strain>
    </source>
</reference>
<organism>
    <name type="scientific">Mycobacterium leprae (strain TN)</name>
    <dbReference type="NCBI Taxonomy" id="272631"/>
    <lineage>
        <taxon>Bacteria</taxon>
        <taxon>Bacillati</taxon>
        <taxon>Actinomycetota</taxon>
        <taxon>Actinomycetes</taxon>
        <taxon>Mycobacteriales</taxon>
        <taxon>Mycobacteriaceae</taxon>
        <taxon>Mycobacterium</taxon>
    </lineage>
</organism>
<keyword id="KW-0067">ATP-binding</keyword>
<keyword id="KW-0133">Cell shape</keyword>
<keyword id="KW-0961">Cell wall biogenesis/degradation</keyword>
<keyword id="KW-0963">Cytoplasm</keyword>
<keyword id="KW-0436">Ligase</keyword>
<keyword id="KW-0460">Magnesium</keyword>
<keyword id="KW-0464">Manganese</keyword>
<keyword id="KW-0479">Metal-binding</keyword>
<keyword id="KW-0547">Nucleotide-binding</keyword>
<keyword id="KW-0573">Peptidoglycan synthesis</keyword>
<keyword id="KW-1185">Reference proteome</keyword>
<protein>
    <recommendedName>
        <fullName evidence="2">D-alanine--D-alanine ligase</fullName>
        <ecNumber evidence="2">6.3.2.4</ecNumber>
    </recommendedName>
    <alternativeName>
        <fullName evidence="2">D-Ala-D-Ala ligase</fullName>
    </alternativeName>
    <alternativeName>
        <fullName evidence="2">D-alanylalanine synthetase</fullName>
    </alternativeName>
</protein>
<feature type="chain" id="PRO_0000177842" description="D-alanine--D-alanine ligase">
    <location>
        <begin position="1"/>
        <end position="384"/>
    </location>
</feature>
<feature type="domain" description="ATP-grasp" evidence="2">
    <location>
        <begin position="167"/>
        <end position="374"/>
    </location>
</feature>
<feature type="binding site" evidence="2">
    <location>
        <begin position="195"/>
        <end position="250"/>
    </location>
    <ligand>
        <name>ATP</name>
        <dbReference type="ChEBI" id="CHEBI:30616"/>
    </ligand>
</feature>
<feature type="binding site" evidence="2">
    <location>
        <position position="329"/>
    </location>
    <ligand>
        <name>Mg(2+)</name>
        <dbReference type="ChEBI" id="CHEBI:18420"/>
        <label>1</label>
    </ligand>
</feature>
<feature type="binding site" evidence="2">
    <location>
        <position position="341"/>
    </location>
    <ligand>
        <name>Mg(2+)</name>
        <dbReference type="ChEBI" id="CHEBI:18420"/>
        <label>1</label>
    </ligand>
</feature>
<feature type="binding site" evidence="2">
    <location>
        <position position="341"/>
    </location>
    <ligand>
        <name>Mg(2+)</name>
        <dbReference type="ChEBI" id="CHEBI:18420"/>
        <label>2</label>
    </ligand>
</feature>
<feature type="binding site" evidence="2">
    <location>
        <position position="343"/>
    </location>
    <ligand>
        <name>Mg(2+)</name>
        <dbReference type="ChEBI" id="CHEBI:18420"/>
        <label>2</label>
    </ligand>
</feature>
<gene>
    <name evidence="2" type="primary">ddl</name>
    <name type="synonym">ddlA</name>
    <name type="ordered locus">ML1678</name>
</gene>